<dbReference type="EMBL" id="CU458896">
    <property type="protein sequence ID" value="CAM64996.1"/>
    <property type="molecule type" value="Genomic_DNA"/>
</dbReference>
<dbReference type="RefSeq" id="WP_005064585.1">
    <property type="nucleotide sequence ID" value="NZ_MLCG01000007.1"/>
</dbReference>
<dbReference type="SMR" id="B1MML1"/>
<dbReference type="GeneID" id="93381865"/>
<dbReference type="KEGG" id="mab:MAB_4928c"/>
<dbReference type="Proteomes" id="UP000007137">
    <property type="component" value="Chromosome"/>
</dbReference>
<dbReference type="GO" id="GO:0005829">
    <property type="term" value="C:cytosol"/>
    <property type="evidence" value="ECO:0007669"/>
    <property type="project" value="TreeGrafter"/>
</dbReference>
<dbReference type="Gene3D" id="3.40.1740.10">
    <property type="entry name" value="VC0467-like"/>
    <property type="match status" value="1"/>
</dbReference>
<dbReference type="HAMAP" id="MF_00758">
    <property type="entry name" value="UPF0301"/>
    <property type="match status" value="1"/>
</dbReference>
<dbReference type="InterPro" id="IPR003774">
    <property type="entry name" value="AlgH-like"/>
</dbReference>
<dbReference type="NCBIfam" id="NF001269">
    <property type="entry name" value="PRK00228.2-1"/>
    <property type="match status" value="1"/>
</dbReference>
<dbReference type="NCBIfam" id="NF001272">
    <property type="entry name" value="PRK00228.2-4"/>
    <property type="match status" value="1"/>
</dbReference>
<dbReference type="PANTHER" id="PTHR30327">
    <property type="entry name" value="UNCHARACTERIZED PROTEIN YQGE"/>
    <property type="match status" value="1"/>
</dbReference>
<dbReference type="PANTHER" id="PTHR30327:SF1">
    <property type="entry name" value="UPF0301 PROTEIN YQGE"/>
    <property type="match status" value="1"/>
</dbReference>
<dbReference type="Pfam" id="PF02622">
    <property type="entry name" value="DUF179"/>
    <property type="match status" value="1"/>
</dbReference>
<dbReference type="SUPFAM" id="SSF143456">
    <property type="entry name" value="VC0467-like"/>
    <property type="match status" value="1"/>
</dbReference>
<sequence length="208" mass="22531">MAHGDEPEEGEAYGEGYMAPPAHRLRAGTLLIANTNLFEPTFRRSVIFIVEHNDGGTLGVVLNRPSETAVYNVLPQWAKLAGKPKTMFVGGPVKRDAALCLATLRAGVSIDGVKGLRHVAGRMAMVDLDAEPEDIAPLVEGIRVFAGYSGWTIGQLEGEVERDDWIVLSALPSDVLTDASEDLWAKVLRRQPLPLSLLATHPIDVSRN</sequence>
<organism>
    <name type="scientific">Mycobacteroides abscessus (strain ATCC 19977 / DSM 44196 / CCUG 20993 / CIP 104536 / JCM 13569 / NCTC 13031 / TMC 1543 / L948)</name>
    <name type="common">Mycobacterium abscessus</name>
    <dbReference type="NCBI Taxonomy" id="561007"/>
    <lineage>
        <taxon>Bacteria</taxon>
        <taxon>Bacillati</taxon>
        <taxon>Actinomycetota</taxon>
        <taxon>Actinomycetes</taxon>
        <taxon>Mycobacteriales</taxon>
        <taxon>Mycobacteriaceae</taxon>
        <taxon>Mycobacteroides</taxon>
        <taxon>Mycobacteroides abscessus</taxon>
    </lineage>
</organism>
<feature type="chain" id="PRO_1000198280" description="UPF0301 protein MAB_4928c">
    <location>
        <begin position="1"/>
        <end position="208"/>
    </location>
</feature>
<accession>B1MML1</accession>
<name>Y4928_MYCA9</name>
<comment type="similarity">
    <text evidence="1">Belongs to the UPF0301 (AlgH) family.</text>
</comment>
<keyword id="KW-1185">Reference proteome</keyword>
<proteinExistence type="inferred from homology"/>
<gene>
    <name type="ordered locus">MAB_4928c</name>
</gene>
<protein>
    <recommendedName>
        <fullName evidence="1">UPF0301 protein MAB_4928c</fullName>
    </recommendedName>
</protein>
<evidence type="ECO:0000255" key="1">
    <source>
        <dbReference type="HAMAP-Rule" id="MF_00758"/>
    </source>
</evidence>
<reference key="1">
    <citation type="journal article" date="2009" name="PLoS ONE">
        <title>Non mycobacterial virulence genes in the genome of the emerging pathogen Mycobacterium abscessus.</title>
        <authorList>
            <person name="Ripoll F."/>
            <person name="Pasek S."/>
            <person name="Schenowitz C."/>
            <person name="Dossat C."/>
            <person name="Barbe V."/>
            <person name="Rottman M."/>
            <person name="Macheras E."/>
            <person name="Heym B."/>
            <person name="Herrmann J.L."/>
            <person name="Daffe M."/>
            <person name="Brosch R."/>
            <person name="Risler J.L."/>
            <person name="Gaillard J.L."/>
        </authorList>
    </citation>
    <scope>NUCLEOTIDE SEQUENCE [LARGE SCALE GENOMIC DNA]</scope>
    <source>
        <strain>ATCC 19977 / DSM 44196 / CCUG 20993 / CIP 104536 / JCM 13569 / NCTC 13031 / TMC 1543 / L948</strain>
    </source>
</reference>